<reference key="1">
    <citation type="submission" date="2007-12" db="EMBL/GenBank/DDBJ databases">
        <title>Brucella suis ATCC 23445 whole genome shotgun sequencing project.</title>
        <authorList>
            <person name="Setubal J.C."/>
            <person name="Bowns C."/>
            <person name="Boyle S."/>
            <person name="Crasta O.R."/>
            <person name="Czar M.J."/>
            <person name="Dharmanolla C."/>
            <person name="Gillespie J.J."/>
            <person name="Kenyon R.W."/>
            <person name="Lu J."/>
            <person name="Mane S."/>
            <person name="Mohapatra S."/>
            <person name="Nagrani S."/>
            <person name="Purkayastha A."/>
            <person name="Rajasimha H.K."/>
            <person name="Shallom J.M."/>
            <person name="Shallom S."/>
            <person name="Shukla M."/>
            <person name="Snyder E.E."/>
            <person name="Sobral B.W."/>
            <person name="Wattam A.R."/>
            <person name="Will R."/>
            <person name="Williams K."/>
            <person name="Yoo H."/>
            <person name="Bruce D."/>
            <person name="Detter C."/>
            <person name="Munk C."/>
            <person name="Brettin T.S."/>
        </authorList>
    </citation>
    <scope>NUCLEOTIDE SEQUENCE [LARGE SCALE GENOMIC DNA]</scope>
    <source>
        <strain>ATCC 23445 / NCTC 10510</strain>
    </source>
</reference>
<dbReference type="EC" id="3.1.26.5" evidence="1"/>
<dbReference type="EMBL" id="CP000912">
    <property type="protein sequence ID" value="ABY39969.1"/>
    <property type="molecule type" value="Genomic_DNA"/>
</dbReference>
<dbReference type="RefSeq" id="WP_004692143.1">
    <property type="nucleotide sequence ID" value="NC_010167.1"/>
</dbReference>
<dbReference type="SMR" id="A9WW33"/>
<dbReference type="GeneID" id="93015193"/>
<dbReference type="KEGG" id="bmt:BSUIS_B1018"/>
<dbReference type="HOGENOM" id="CLU_117179_6_1_5"/>
<dbReference type="Proteomes" id="UP000008545">
    <property type="component" value="Chromosome II"/>
</dbReference>
<dbReference type="GO" id="GO:0030677">
    <property type="term" value="C:ribonuclease P complex"/>
    <property type="evidence" value="ECO:0007669"/>
    <property type="project" value="TreeGrafter"/>
</dbReference>
<dbReference type="GO" id="GO:0042781">
    <property type="term" value="F:3'-tRNA processing endoribonuclease activity"/>
    <property type="evidence" value="ECO:0007669"/>
    <property type="project" value="TreeGrafter"/>
</dbReference>
<dbReference type="GO" id="GO:0004526">
    <property type="term" value="F:ribonuclease P activity"/>
    <property type="evidence" value="ECO:0007669"/>
    <property type="project" value="UniProtKB-UniRule"/>
</dbReference>
<dbReference type="GO" id="GO:0000049">
    <property type="term" value="F:tRNA binding"/>
    <property type="evidence" value="ECO:0007669"/>
    <property type="project" value="UniProtKB-UniRule"/>
</dbReference>
<dbReference type="GO" id="GO:0001682">
    <property type="term" value="P:tRNA 5'-leader removal"/>
    <property type="evidence" value="ECO:0007669"/>
    <property type="project" value="UniProtKB-UniRule"/>
</dbReference>
<dbReference type="Gene3D" id="3.30.230.10">
    <property type="match status" value="1"/>
</dbReference>
<dbReference type="HAMAP" id="MF_00227">
    <property type="entry name" value="RNase_P"/>
    <property type="match status" value="1"/>
</dbReference>
<dbReference type="InterPro" id="IPR020568">
    <property type="entry name" value="Ribosomal_Su5_D2-typ_SF"/>
</dbReference>
<dbReference type="InterPro" id="IPR014721">
    <property type="entry name" value="Ribsml_uS5_D2-typ_fold_subgr"/>
</dbReference>
<dbReference type="InterPro" id="IPR000100">
    <property type="entry name" value="RNase_P"/>
</dbReference>
<dbReference type="InterPro" id="IPR020539">
    <property type="entry name" value="RNase_P_CS"/>
</dbReference>
<dbReference type="NCBIfam" id="TIGR00188">
    <property type="entry name" value="rnpA"/>
    <property type="match status" value="1"/>
</dbReference>
<dbReference type="PANTHER" id="PTHR33992">
    <property type="entry name" value="RIBONUCLEASE P PROTEIN COMPONENT"/>
    <property type="match status" value="1"/>
</dbReference>
<dbReference type="PANTHER" id="PTHR33992:SF1">
    <property type="entry name" value="RIBONUCLEASE P PROTEIN COMPONENT"/>
    <property type="match status" value="1"/>
</dbReference>
<dbReference type="Pfam" id="PF00825">
    <property type="entry name" value="Ribonuclease_P"/>
    <property type="match status" value="1"/>
</dbReference>
<dbReference type="SUPFAM" id="SSF54211">
    <property type="entry name" value="Ribosomal protein S5 domain 2-like"/>
    <property type="match status" value="1"/>
</dbReference>
<dbReference type="PROSITE" id="PS00648">
    <property type="entry name" value="RIBONUCLEASE_P"/>
    <property type="match status" value="1"/>
</dbReference>
<proteinExistence type="inferred from homology"/>
<keyword id="KW-0255">Endonuclease</keyword>
<keyword id="KW-0378">Hydrolase</keyword>
<keyword id="KW-0540">Nuclease</keyword>
<keyword id="KW-0694">RNA-binding</keyword>
<keyword id="KW-0819">tRNA processing</keyword>
<evidence type="ECO:0000255" key="1">
    <source>
        <dbReference type="HAMAP-Rule" id="MF_00227"/>
    </source>
</evidence>
<evidence type="ECO:0000256" key="2">
    <source>
        <dbReference type="SAM" id="MobiDB-lite"/>
    </source>
</evidence>
<protein>
    <recommendedName>
        <fullName evidence="1">Ribonuclease P protein component</fullName>
        <shortName evidence="1">RNase P protein</shortName>
        <shortName evidence="1">RNaseP protein</shortName>
        <ecNumber evidence="1">3.1.26.5</ecNumber>
    </recommendedName>
    <alternativeName>
        <fullName evidence="1">Protein C5</fullName>
    </alternativeName>
</protein>
<sequence>MKSKKQILRLRKRAEFLTVRNGEKRRGPLFLMEVRERTEEESNAAKTGDNPRVGFTVTKKNGNAVIRNRIRRRLKEAIRCHAGRDMAPSTDYVIVAREQALNAPFSQLTEELSRRITAKGERRSGGKRRTERPEPGPVNGK</sequence>
<name>RNPA_BRUSI</name>
<feature type="chain" id="PRO_1000078190" description="Ribonuclease P protein component">
    <location>
        <begin position="1"/>
        <end position="141"/>
    </location>
</feature>
<feature type="region of interest" description="Disordered" evidence="2">
    <location>
        <begin position="37"/>
        <end position="56"/>
    </location>
</feature>
<feature type="region of interest" description="Disordered" evidence="2">
    <location>
        <begin position="114"/>
        <end position="141"/>
    </location>
</feature>
<feature type="compositionally biased region" description="Basic and acidic residues" evidence="2">
    <location>
        <begin position="114"/>
        <end position="124"/>
    </location>
</feature>
<gene>
    <name evidence="1" type="primary">rnpA</name>
    <name type="ordered locus">BSUIS_B1018</name>
</gene>
<accession>A9WW33</accession>
<organism>
    <name type="scientific">Brucella suis (strain ATCC 23445 / NCTC 10510)</name>
    <dbReference type="NCBI Taxonomy" id="470137"/>
    <lineage>
        <taxon>Bacteria</taxon>
        <taxon>Pseudomonadati</taxon>
        <taxon>Pseudomonadota</taxon>
        <taxon>Alphaproteobacteria</taxon>
        <taxon>Hyphomicrobiales</taxon>
        <taxon>Brucellaceae</taxon>
        <taxon>Brucella/Ochrobactrum group</taxon>
        <taxon>Brucella</taxon>
    </lineage>
</organism>
<comment type="function">
    <text evidence="1">RNaseP catalyzes the removal of the 5'-leader sequence from pre-tRNA to produce the mature 5'-terminus. It can also cleave other RNA substrates such as 4.5S RNA. The protein component plays an auxiliary but essential role in vivo by binding to the 5'-leader sequence and broadening the substrate specificity of the ribozyme.</text>
</comment>
<comment type="catalytic activity">
    <reaction evidence="1">
        <text>Endonucleolytic cleavage of RNA, removing 5'-extranucleotides from tRNA precursor.</text>
        <dbReference type="EC" id="3.1.26.5"/>
    </reaction>
</comment>
<comment type="subunit">
    <text evidence="1">Consists of a catalytic RNA component (M1 or rnpB) and a protein subunit.</text>
</comment>
<comment type="similarity">
    <text evidence="1">Belongs to the RnpA family.</text>
</comment>